<protein>
    <recommendedName>
        <fullName evidence="1">Aliphatic sulfonates import ATP-binding protein SsuB 2</fullName>
        <ecNumber evidence="1">7.6.2.14</ecNumber>
    </recommendedName>
</protein>
<dbReference type="EC" id="7.6.2.14" evidence="1"/>
<dbReference type="EMBL" id="AE007871">
    <property type="protein sequence ID" value="AAK91047.2"/>
    <property type="molecule type" value="Genomic_DNA"/>
</dbReference>
<dbReference type="PIR" id="AE3238">
    <property type="entry name" value="AE3238"/>
</dbReference>
<dbReference type="RefSeq" id="NP_396606.2">
    <property type="nucleotide sequence ID" value="NC_003065.3"/>
</dbReference>
<dbReference type="SMR" id="Q8U648"/>
<dbReference type="EnsemblBacteria" id="AAK91047">
    <property type="protein sequence ID" value="AAK91047"/>
    <property type="gene ID" value="Atu6087"/>
</dbReference>
<dbReference type="KEGG" id="atu:Atu6087"/>
<dbReference type="PATRIC" id="fig|176299.10.peg.5294"/>
<dbReference type="HOGENOM" id="CLU_000604_1_22_5"/>
<dbReference type="OrthoDB" id="9797536at2"/>
<dbReference type="PhylomeDB" id="Q8U648"/>
<dbReference type="BioCyc" id="AGRO:ATU6087-MONOMER"/>
<dbReference type="Proteomes" id="UP000000813">
    <property type="component" value="Plasmid Ti"/>
</dbReference>
<dbReference type="GO" id="GO:0005886">
    <property type="term" value="C:plasma membrane"/>
    <property type="evidence" value="ECO:0007669"/>
    <property type="project" value="UniProtKB-SubCell"/>
</dbReference>
<dbReference type="GO" id="GO:0005524">
    <property type="term" value="F:ATP binding"/>
    <property type="evidence" value="ECO:0007669"/>
    <property type="project" value="UniProtKB-KW"/>
</dbReference>
<dbReference type="GO" id="GO:0016887">
    <property type="term" value="F:ATP hydrolysis activity"/>
    <property type="evidence" value="ECO:0007669"/>
    <property type="project" value="InterPro"/>
</dbReference>
<dbReference type="CDD" id="cd03293">
    <property type="entry name" value="ABC_NrtD_SsuB_transporters"/>
    <property type="match status" value="1"/>
</dbReference>
<dbReference type="Gene3D" id="3.40.50.300">
    <property type="entry name" value="P-loop containing nucleotide triphosphate hydrolases"/>
    <property type="match status" value="1"/>
</dbReference>
<dbReference type="InterPro" id="IPR003593">
    <property type="entry name" value="AAA+_ATPase"/>
</dbReference>
<dbReference type="InterPro" id="IPR003439">
    <property type="entry name" value="ABC_transporter-like_ATP-bd"/>
</dbReference>
<dbReference type="InterPro" id="IPR017871">
    <property type="entry name" value="ABC_transporter-like_CS"/>
</dbReference>
<dbReference type="InterPro" id="IPR050166">
    <property type="entry name" value="ABC_transporter_ATP-bind"/>
</dbReference>
<dbReference type="InterPro" id="IPR027417">
    <property type="entry name" value="P-loop_NTPase"/>
</dbReference>
<dbReference type="PANTHER" id="PTHR42788:SF17">
    <property type="entry name" value="ALIPHATIC SULFONATES IMPORT ATP-BINDING PROTEIN SSUB"/>
    <property type="match status" value="1"/>
</dbReference>
<dbReference type="PANTHER" id="PTHR42788">
    <property type="entry name" value="TAURINE IMPORT ATP-BINDING PROTEIN-RELATED"/>
    <property type="match status" value="1"/>
</dbReference>
<dbReference type="Pfam" id="PF00005">
    <property type="entry name" value="ABC_tran"/>
    <property type="match status" value="1"/>
</dbReference>
<dbReference type="SMART" id="SM00382">
    <property type="entry name" value="AAA"/>
    <property type="match status" value="1"/>
</dbReference>
<dbReference type="SUPFAM" id="SSF52540">
    <property type="entry name" value="P-loop containing nucleoside triphosphate hydrolases"/>
    <property type="match status" value="1"/>
</dbReference>
<dbReference type="PROSITE" id="PS00211">
    <property type="entry name" value="ABC_TRANSPORTER_1"/>
    <property type="match status" value="1"/>
</dbReference>
<dbReference type="PROSITE" id="PS50893">
    <property type="entry name" value="ABC_TRANSPORTER_2"/>
    <property type="match status" value="1"/>
</dbReference>
<dbReference type="PROSITE" id="PS51291">
    <property type="entry name" value="SSUB"/>
    <property type="match status" value="1"/>
</dbReference>
<evidence type="ECO:0000255" key="1">
    <source>
        <dbReference type="HAMAP-Rule" id="MF_01724"/>
    </source>
</evidence>
<gene>
    <name evidence="1" type="primary">ssuB2</name>
    <name type="ordered locus">Atu6087</name>
    <name type="ORF">AGR_pTi_165</name>
</gene>
<organism>
    <name type="scientific">Agrobacterium fabrum (strain C58 / ATCC 33970)</name>
    <name type="common">Agrobacterium tumefaciens (strain C58)</name>
    <dbReference type="NCBI Taxonomy" id="176299"/>
    <lineage>
        <taxon>Bacteria</taxon>
        <taxon>Pseudomonadati</taxon>
        <taxon>Pseudomonadota</taxon>
        <taxon>Alphaproteobacteria</taxon>
        <taxon>Hyphomicrobiales</taxon>
        <taxon>Rhizobiaceae</taxon>
        <taxon>Rhizobium/Agrobacterium group</taxon>
        <taxon>Agrobacterium</taxon>
        <taxon>Agrobacterium tumefaciens complex</taxon>
    </lineage>
</organism>
<keyword id="KW-0067">ATP-binding</keyword>
<keyword id="KW-0997">Cell inner membrane</keyword>
<keyword id="KW-1003">Cell membrane</keyword>
<keyword id="KW-0472">Membrane</keyword>
<keyword id="KW-0547">Nucleotide-binding</keyword>
<keyword id="KW-0614">Plasmid</keyword>
<keyword id="KW-1185">Reference proteome</keyword>
<keyword id="KW-1278">Translocase</keyword>
<keyword id="KW-0813">Transport</keyword>
<feature type="chain" id="PRO_0000279882" description="Aliphatic sulfonates import ATP-binding protein SsuB 2">
    <location>
        <begin position="1"/>
        <end position="259"/>
    </location>
</feature>
<feature type="domain" description="ABC transporter" evidence="1">
    <location>
        <begin position="17"/>
        <end position="238"/>
    </location>
</feature>
<feature type="binding site" evidence="1">
    <location>
        <begin position="49"/>
        <end position="56"/>
    </location>
    <ligand>
        <name>ATP</name>
        <dbReference type="ChEBI" id="CHEBI:30616"/>
    </ligand>
</feature>
<reference key="1">
    <citation type="journal article" date="2001" name="Science">
        <title>The genome of the natural genetic engineer Agrobacterium tumefaciens C58.</title>
        <authorList>
            <person name="Wood D.W."/>
            <person name="Setubal J.C."/>
            <person name="Kaul R."/>
            <person name="Monks D.E."/>
            <person name="Kitajima J.P."/>
            <person name="Okura V.K."/>
            <person name="Zhou Y."/>
            <person name="Chen L."/>
            <person name="Wood G.E."/>
            <person name="Almeida N.F. Jr."/>
            <person name="Woo L."/>
            <person name="Chen Y."/>
            <person name="Paulsen I.T."/>
            <person name="Eisen J.A."/>
            <person name="Karp P.D."/>
            <person name="Bovee D. Sr."/>
            <person name="Chapman P."/>
            <person name="Clendenning J."/>
            <person name="Deatherage G."/>
            <person name="Gillet W."/>
            <person name="Grant C."/>
            <person name="Kutyavin T."/>
            <person name="Levy R."/>
            <person name="Li M.-J."/>
            <person name="McClelland E."/>
            <person name="Palmieri A."/>
            <person name="Raymond C."/>
            <person name="Rouse G."/>
            <person name="Saenphimmachak C."/>
            <person name="Wu Z."/>
            <person name="Romero P."/>
            <person name="Gordon D."/>
            <person name="Zhang S."/>
            <person name="Yoo H."/>
            <person name="Tao Y."/>
            <person name="Biddle P."/>
            <person name="Jung M."/>
            <person name="Krespan W."/>
            <person name="Perry M."/>
            <person name="Gordon-Kamm B."/>
            <person name="Liao L."/>
            <person name="Kim S."/>
            <person name="Hendrick C."/>
            <person name="Zhao Z.-Y."/>
            <person name="Dolan M."/>
            <person name="Chumley F."/>
            <person name="Tingey S.V."/>
            <person name="Tomb J.-F."/>
            <person name="Gordon M.P."/>
            <person name="Olson M.V."/>
            <person name="Nester E.W."/>
        </authorList>
    </citation>
    <scope>NUCLEOTIDE SEQUENCE [LARGE SCALE GENOMIC DNA]</scope>
</reference>
<reference key="2">
    <citation type="journal article" date="2001" name="Science">
        <title>Genome sequence of the plant pathogen and biotechnology agent Agrobacterium tumefaciens C58.</title>
        <authorList>
            <person name="Goodner B."/>
            <person name="Hinkle G."/>
            <person name="Gattung S."/>
            <person name="Miller N."/>
            <person name="Blanchard M."/>
            <person name="Qurollo B."/>
            <person name="Goldman B.S."/>
            <person name="Cao Y."/>
            <person name="Askenazi M."/>
            <person name="Halling C."/>
            <person name="Mullin L."/>
            <person name="Houmiel K."/>
            <person name="Gordon J."/>
            <person name="Vaudin M."/>
            <person name="Iartchouk O."/>
            <person name="Epp A."/>
            <person name="Liu F."/>
            <person name="Wollam C."/>
            <person name="Allinger M."/>
            <person name="Doughty D."/>
            <person name="Scott C."/>
            <person name="Lappas C."/>
            <person name="Markelz B."/>
            <person name="Flanagan C."/>
            <person name="Crowell C."/>
            <person name="Gurson J."/>
            <person name="Lomo C."/>
            <person name="Sear C."/>
            <person name="Strub G."/>
            <person name="Cielo C."/>
            <person name="Slater S."/>
        </authorList>
    </citation>
    <scope>NUCLEOTIDE SEQUENCE [LARGE SCALE GENOMIC DNA]</scope>
    <source>
        <strain>C58 / ATCC 33970</strain>
    </source>
</reference>
<name>SSUB2_AGRFC</name>
<accession>Q8U648</accession>
<accession>Q7D2J7</accession>
<geneLocation type="plasmid">
    <name>pTiC58</name>
</geneLocation>
<sequence>MAKEVSLSNTSAGGAALDILGLWKGFDGTEVLKGLSLNVPAGQFLSIVGRSGCGKSTLLRLIADLETIDGGTIQIDGNPLSEISGEVRMMFQDARLLPWRTVLQNIGIGLPNPWQNRARKALAEVGLSEHADKWPSQLSGGQRQRVALARALIHRPRLLLLDEPLGALDALTRLEMQDLIESIRARHGFTVLLVTHDVEEAIALGDRVIVMEQGEIVLELDIELARLRVRSSQAFTSIEEKVLSRVLNSRNAPSGDDCK</sequence>
<comment type="function">
    <text evidence="1">Part of the ABC transporter complex SsuABC involved in aliphatic sulfonates import. Responsible for energy coupling to the transport system.</text>
</comment>
<comment type="catalytic activity">
    <reaction evidence="1">
        <text>ATP + H2O + aliphatic sulfonate-[sulfonate-binding protein]Side 1 = ADP + phosphate + aliphatic sulfonateSide 2 + [sulfonate-binding protein]Side 1.</text>
        <dbReference type="EC" id="7.6.2.14"/>
    </reaction>
</comment>
<comment type="subunit">
    <text evidence="1">The complex is composed of two ATP-binding proteins (SsuB), two transmembrane proteins (SsuC) and a solute-binding protein (SsuA).</text>
</comment>
<comment type="subcellular location">
    <subcellularLocation>
        <location evidence="1">Cell inner membrane</location>
        <topology evidence="1">Peripheral membrane protein</topology>
    </subcellularLocation>
</comment>
<comment type="similarity">
    <text evidence="1">Belongs to the ABC transporter superfamily. Aliphatic sulfonates importer (TC 3.A.1.17.2) family.</text>
</comment>
<proteinExistence type="inferred from homology"/>